<sequence>MIENWHRGFVLHRREYSETSLLVDFFTEEHGRITLLAKGARRPHSPLKAVLQPFTPLLLRWSGKGDLKTLTKAEPASLTLPMQTLALYSGFYVNEVLARVLENQTAYPELFQHYLQCMTRLATQPEQIEPILRTFEFQMLKALGYGVNFSICAATGDPVSPSMTYQFRENQGFIASLLQNNYTFLGKDLLAFEQLDFSDKATLQAAKRFTRMALKPYLGSQPLKSRELFQNILPNKLKSG</sequence>
<accession>B0BUA8</accession>
<organism>
    <name type="scientific">Actinobacillus pleuropneumoniae serotype 3 (strain JL03)</name>
    <dbReference type="NCBI Taxonomy" id="434271"/>
    <lineage>
        <taxon>Bacteria</taxon>
        <taxon>Pseudomonadati</taxon>
        <taxon>Pseudomonadota</taxon>
        <taxon>Gammaproteobacteria</taxon>
        <taxon>Pasteurellales</taxon>
        <taxon>Pasteurellaceae</taxon>
        <taxon>Actinobacillus</taxon>
    </lineage>
</organism>
<gene>
    <name evidence="1" type="primary">recO</name>
    <name type="ordered locus">APJL_0538</name>
</gene>
<comment type="function">
    <text evidence="1">Involved in DNA repair and RecF pathway recombination.</text>
</comment>
<comment type="similarity">
    <text evidence="1">Belongs to the RecO family.</text>
</comment>
<reference key="1">
    <citation type="journal article" date="2008" name="PLoS ONE">
        <title>Genome biology of Actinobacillus pleuropneumoniae JL03, an isolate of serotype 3 prevalent in China.</title>
        <authorList>
            <person name="Xu Z."/>
            <person name="Zhou Y."/>
            <person name="Li L."/>
            <person name="Zhou R."/>
            <person name="Xiao S."/>
            <person name="Wan Y."/>
            <person name="Zhang S."/>
            <person name="Wang K."/>
            <person name="Li W."/>
            <person name="Li L."/>
            <person name="Jin H."/>
            <person name="Kang M."/>
            <person name="Dalai B."/>
            <person name="Li T."/>
            <person name="Liu L."/>
            <person name="Cheng Y."/>
            <person name="Zhang L."/>
            <person name="Xu T."/>
            <person name="Zheng H."/>
            <person name="Pu S."/>
            <person name="Wang B."/>
            <person name="Gu W."/>
            <person name="Zhang X.L."/>
            <person name="Zhu G.-F."/>
            <person name="Wang S."/>
            <person name="Zhao G.-P."/>
            <person name="Chen H."/>
        </authorList>
    </citation>
    <scope>NUCLEOTIDE SEQUENCE [LARGE SCALE GENOMIC DNA]</scope>
    <source>
        <strain>JL03</strain>
    </source>
</reference>
<dbReference type="EMBL" id="CP000687">
    <property type="protein sequence ID" value="ABY69113.1"/>
    <property type="molecule type" value="Genomic_DNA"/>
</dbReference>
<dbReference type="RefSeq" id="WP_012262847.1">
    <property type="nucleotide sequence ID" value="NC_010278.1"/>
</dbReference>
<dbReference type="SMR" id="B0BUA8"/>
<dbReference type="KEGG" id="apj:APJL_0538"/>
<dbReference type="HOGENOM" id="CLU_066645_1_0_6"/>
<dbReference type="Proteomes" id="UP000008547">
    <property type="component" value="Chromosome"/>
</dbReference>
<dbReference type="GO" id="GO:0043590">
    <property type="term" value="C:bacterial nucleoid"/>
    <property type="evidence" value="ECO:0007669"/>
    <property type="project" value="TreeGrafter"/>
</dbReference>
<dbReference type="GO" id="GO:0006310">
    <property type="term" value="P:DNA recombination"/>
    <property type="evidence" value="ECO:0007669"/>
    <property type="project" value="UniProtKB-UniRule"/>
</dbReference>
<dbReference type="GO" id="GO:0006302">
    <property type="term" value="P:double-strand break repair"/>
    <property type="evidence" value="ECO:0007669"/>
    <property type="project" value="TreeGrafter"/>
</dbReference>
<dbReference type="Gene3D" id="2.40.50.140">
    <property type="entry name" value="Nucleic acid-binding proteins"/>
    <property type="match status" value="1"/>
</dbReference>
<dbReference type="Gene3D" id="1.20.1440.120">
    <property type="entry name" value="Recombination protein O, C-terminal domain"/>
    <property type="match status" value="1"/>
</dbReference>
<dbReference type="HAMAP" id="MF_00201">
    <property type="entry name" value="RecO"/>
    <property type="match status" value="1"/>
</dbReference>
<dbReference type="InterPro" id="IPR037278">
    <property type="entry name" value="ARFGAP/RecO"/>
</dbReference>
<dbReference type="InterPro" id="IPR022572">
    <property type="entry name" value="DNA_rep/recomb_RecO_N"/>
</dbReference>
<dbReference type="InterPro" id="IPR012340">
    <property type="entry name" value="NA-bd_OB-fold"/>
</dbReference>
<dbReference type="InterPro" id="IPR003717">
    <property type="entry name" value="RecO"/>
</dbReference>
<dbReference type="InterPro" id="IPR042242">
    <property type="entry name" value="RecO_C"/>
</dbReference>
<dbReference type="NCBIfam" id="TIGR00613">
    <property type="entry name" value="reco"/>
    <property type="match status" value="1"/>
</dbReference>
<dbReference type="PANTHER" id="PTHR33991">
    <property type="entry name" value="DNA REPAIR PROTEIN RECO"/>
    <property type="match status" value="1"/>
</dbReference>
<dbReference type="PANTHER" id="PTHR33991:SF1">
    <property type="entry name" value="DNA REPAIR PROTEIN RECO"/>
    <property type="match status" value="1"/>
</dbReference>
<dbReference type="Pfam" id="PF02565">
    <property type="entry name" value="RecO_C"/>
    <property type="match status" value="1"/>
</dbReference>
<dbReference type="Pfam" id="PF11967">
    <property type="entry name" value="RecO_N"/>
    <property type="match status" value="1"/>
</dbReference>
<dbReference type="SUPFAM" id="SSF57863">
    <property type="entry name" value="ArfGap/RecO-like zinc finger"/>
    <property type="match status" value="1"/>
</dbReference>
<dbReference type="SUPFAM" id="SSF50249">
    <property type="entry name" value="Nucleic acid-binding proteins"/>
    <property type="match status" value="1"/>
</dbReference>
<proteinExistence type="inferred from homology"/>
<protein>
    <recommendedName>
        <fullName evidence="1">DNA repair protein RecO</fullName>
    </recommendedName>
    <alternativeName>
        <fullName evidence="1">Recombination protein O</fullName>
    </alternativeName>
</protein>
<name>RECO_ACTPJ</name>
<keyword id="KW-0227">DNA damage</keyword>
<keyword id="KW-0233">DNA recombination</keyword>
<keyword id="KW-0234">DNA repair</keyword>
<evidence type="ECO:0000255" key="1">
    <source>
        <dbReference type="HAMAP-Rule" id="MF_00201"/>
    </source>
</evidence>
<feature type="chain" id="PRO_1000099360" description="DNA repair protein RecO">
    <location>
        <begin position="1"/>
        <end position="240"/>
    </location>
</feature>